<keyword id="KW-0002">3D-structure</keyword>
<keyword id="KW-1185">Reference proteome</keyword>
<organism>
    <name type="scientific">Bacillus subtilis (strain 168)</name>
    <dbReference type="NCBI Taxonomy" id="224308"/>
    <lineage>
        <taxon>Bacteria</taxon>
        <taxon>Bacillati</taxon>
        <taxon>Bacillota</taxon>
        <taxon>Bacilli</taxon>
        <taxon>Bacillales</taxon>
        <taxon>Bacillaceae</taxon>
        <taxon>Bacillus</taxon>
    </lineage>
</organism>
<feature type="chain" id="PRO_0000049843" description="Uncharacterized protein YqkK">
    <location>
        <begin position="1"/>
        <end position="71"/>
    </location>
</feature>
<feature type="region of interest" description="Disordered" evidence="1">
    <location>
        <begin position="1"/>
        <end position="39"/>
    </location>
</feature>
<feature type="region of interest" description="Disordered" evidence="1">
    <location>
        <begin position="51"/>
        <end position="71"/>
    </location>
</feature>
<feature type="compositionally biased region" description="Basic residues" evidence="1">
    <location>
        <begin position="1"/>
        <end position="16"/>
    </location>
</feature>
<feature type="compositionally biased region" description="Polar residues" evidence="1">
    <location>
        <begin position="25"/>
        <end position="35"/>
    </location>
</feature>
<feature type="compositionally biased region" description="Basic and acidic residues" evidence="1">
    <location>
        <begin position="51"/>
        <end position="64"/>
    </location>
</feature>
<name>YQKK_BACSU</name>
<reference key="1">
    <citation type="journal article" date="1993" name="J. Bacteriol.">
        <title>Physical and functional characterization of the Bacillus subtilis spoIIM gene.</title>
        <authorList>
            <person name="Smith K."/>
            <person name="Bayer M.E."/>
            <person name="Youngman P."/>
        </authorList>
    </citation>
    <scope>NUCLEOTIDE SEQUENCE [GENOMIC DNA]</scope>
</reference>
<reference key="2">
    <citation type="journal article" date="1996" name="Microbiology">
        <title>Systematic sequencing of the 283 kb 210 degrees-232 degrees region of the Bacillus subtilis genome containing the skin element and many sporulation genes.</title>
        <authorList>
            <person name="Mizuno M."/>
            <person name="Masuda S."/>
            <person name="Takemaru K."/>
            <person name="Hosono S."/>
            <person name="Sato T."/>
            <person name="Takeuchi M."/>
            <person name="Kobayashi Y."/>
        </authorList>
    </citation>
    <scope>NUCLEOTIDE SEQUENCE [GENOMIC DNA]</scope>
    <source>
        <strain>168 / JH642</strain>
    </source>
</reference>
<reference key="3">
    <citation type="journal article" date="1997" name="Nature">
        <title>The complete genome sequence of the Gram-positive bacterium Bacillus subtilis.</title>
        <authorList>
            <person name="Kunst F."/>
            <person name="Ogasawara N."/>
            <person name="Moszer I."/>
            <person name="Albertini A.M."/>
            <person name="Alloni G."/>
            <person name="Azevedo V."/>
            <person name="Bertero M.G."/>
            <person name="Bessieres P."/>
            <person name="Bolotin A."/>
            <person name="Borchert S."/>
            <person name="Borriss R."/>
            <person name="Boursier L."/>
            <person name="Brans A."/>
            <person name="Braun M."/>
            <person name="Brignell S.C."/>
            <person name="Bron S."/>
            <person name="Brouillet S."/>
            <person name="Bruschi C.V."/>
            <person name="Caldwell B."/>
            <person name="Capuano V."/>
            <person name="Carter N.M."/>
            <person name="Choi S.-K."/>
            <person name="Codani J.-J."/>
            <person name="Connerton I.F."/>
            <person name="Cummings N.J."/>
            <person name="Daniel R.A."/>
            <person name="Denizot F."/>
            <person name="Devine K.M."/>
            <person name="Duesterhoeft A."/>
            <person name="Ehrlich S.D."/>
            <person name="Emmerson P.T."/>
            <person name="Entian K.-D."/>
            <person name="Errington J."/>
            <person name="Fabret C."/>
            <person name="Ferrari E."/>
            <person name="Foulger D."/>
            <person name="Fritz C."/>
            <person name="Fujita M."/>
            <person name="Fujita Y."/>
            <person name="Fuma S."/>
            <person name="Galizzi A."/>
            <person name="Galleron N."/>
            <person name="Ghim S.-Y."/>
            <person name="Glaser P."/>
            <person name="Goffeau A."/>
            <person name="Golightly E.J."/>
            <person name="Grandi G."/>
            <person name="Guiseppi G."/>
            <person name="Guy B.J."/>
            <person name="Haga K."/>
            <person name="Haiech J."/>
            <person name="Harwood C.R."/>
            <person name="Henaut A."/>
            <person name="Hilbert H."/>
            <person name="Holsappel S."/>
            <person name="Hosono S."/>
            <person name="Hullo M.-F."/>
            <person name="Itaya M."/>
            <person name="Jones L.-M."/>
            <person name="Joris B."/>
            <person name="Karamata D."/>
            <person name="Kasahara Y."/>
            <person name="Klaerr-Blanchard M."/>
            <person name="Klein C."/>
            <person name="Kobayashi Y."/>
            <person name="Koetter P."/>
            <person name="Koningstein G."/>
            <person name="Krogh S."/>
            <person name="Kumano M."/>
            <person name="Kurita K."/>
            <person name="Lapidus A."/>
            <person name="Lardinois S."/>
            <person name="Lauber J."/>
            <person name="Lazarevic V."/>
            <person name="Lee S.-M."/>
            <person name="Levine A."/>
            <person name="Liu H."/>
            <person name="Masuda S."/>
            <person name="Mauel C."/>
            <person name="Medigue C."/>
            <person name="Medina N."/>
            <person name="Mellado R.P."/>
            <person name="Mizuno M."/>
            <person name="Moestl D."/>
            <person name="Nakai S."/>
            <person name="Noback M."/>
            <person name="Noone D."/>
            <person name="O'Reilly M."/>
            <person name="Ogawa K."/>
            <person name="Ogiwara A."/>
            <person name="Oudega B."/>
            <person name="Park S.-H."/>
            <person name="Parro V."/>
            <person name="Pohl T.M."/>
            <person name="Portetelle D."/>
            <person name="Porwollik S."/>
            <person name="Prescott A.M."/>
            <person name="Presecan E."/>
            <person name="Pujic P."/>
            <person name="Purnelle B."/>
            <person name="Rapoport G."/>
            <person name="Rey M."/>
            <person name="Reynolds S."/>
            <person name="Rieger M."/>
            <person name="Rivolta C."/>
            <person name="Rocha E."/>
            <person name="Roche B."/>
            <person name="Rose M."/>
            <person name="Sadaie Y."/>
            <person name="Sato T."/>
            <person name="Scanlan E."/>
            <person name="Schleich S."/>
            <person name="Schroeter R."/>
            <person name="Scoffone F."/>
            <person name="Sekiguchi J."/>
            <person name="Sekowska A."/>
            <person name="Seror S.J."/>
            <person name="Serror P."/>
            <person name="Shin B.-S."/>
            <person name="Soldo B."/>
            <person name="Sorokin A."/>
            <person name="Tacconi E."/>
            <person name="Takagi T."/>
            <person name="Takahashi H."/>
            <person name="Takemaru K."/>
            <person name="Takeuchi M."/>
            <person name="Tamakoshi A."/>
            <person name="Tanaka T."/>
            <person name="Terpstra P."/>
            <person name="Tognoni A."/>
            <person name="Tosato V."/>
            <person name="Uchiyama S."/>
            <person name="Vandenbol M."/>
            <person name="Vannier F."/>
            <person name="Vassarotti A."/>
            <person name="Viari A."/>
            <person name="Wambutt R."/>
            <person name="Wedler E."/>
            <person name="Wedler H."/>
            <person name="Weitzenegger T."/>
            <person name="Winters P."/>
            <person name="Wipat A."/>
            <person name="Yamamoto H."/>
            <person name="Yamane K."/>
            <person name="Yasumoto K."/>
            <person name="Yata K."/>
            <person name="Yoshida K."/>
            <person name="Yoshikawa H.-F."/>
            <person name="Zumstein E."/>
            <person name="Yoshikawa H."/>
            <person name="Danchin A."/>
        </authorList>
    </citation>
    <scope>NUCLEOTIDE SEQUENCE [LARGE SCALE GENOMIC DNA]</scope>
    <source>
        <strain>168</strain>
    </source>
</reference>
<gene>
    <name type="primary">yqkK</name>
    <name type="ordered locus">BSU23540</name>
</gene>
<protein>
    <recommendedName>
        <fullName>Uncharacterized protein YqkK</fullName>
    </recommendedName>
</protein>
<sequence>MAKSQAKKKRGHRLRNGGRDVLLSRGSTPSFSTHGRMTKSKKEILNKRKHKNPYDHTAVDDKDFFVPQKAA</sequence>
<evidence type="ECO:0000256" key="1">
    <source>
        <dbReference type="SAM" id="MobiDB-lite"/>
    </source>
</evidence>
<dbReference type="EMBL" id="L06664">
    <property type="status" value="NOT_ANNOTATED_CDS"/>
    <property type="molecule type" value="Genomic_DNA"/>
</dbReference>
<dbReference type="EMBL" id="D84432">
    <property type="protein sequence ID" value="BAA12646.1"/>
    <property type="molecule type" value="Genomic_DNA"/>
</dbReference>
<dbReference type="EMBL" id="AL009126">
    <property type="protein sequence ID" value="CAB14286.1"/>
    <property type="molecule type" value="Genomic_DNA"/>
</dbReference>
<dbReference type="PIR" id="D69967">
    <property type="entry name" value="D69967"/>
</dbReference>
<dbReference type="RefSeq" id="NP_390235.1">
    <property type="nucleotide sequence ID" value="NC_000964.3"/>
</dbReference>
<dbReference type="RefSeq" id="WP_003246030.1">
    <property type="nucleotide sequence ID" value="NZ_OZ025638.1"/>
</dbReference>
<dbReference type="PDB" id="6SZS">
    <property type="method" value="EM"/>
    <property type="resolution" value="3.06 A"/>
    <property type="chains" value="y=1-71"/>
</dbReference>
<dbReference type="PDBsum" id="6SZS"/>
<dbReference type="EMDB" id="EMD-10353"/>
<dbReference type="SMR" id="P54573"/>
<dbReference type="FunCoup" id="P54573">
    <property type="interactions" value="9"/>
</dbReference>
<dbReference type="STRING" id="224308.BSU23540"/>
<dbReference type="PaxDb" id="224308-BSU23540"/>
<dbReference type="EnsemblBacteria" id="CAB14286">
    <property type="protein sequence ID" value="CAB14286"/>
    <property type="gene ID" value="BSU_23540"/>
</dbReference>
<dbReference type="GeneID" id="938724"/>
<dbReference type="KEGG" id="bsu:BSU23540"/>
<dbReference type="PATRIC" id="fig|224308.179.peg.2566"/>
<dbReference type="eggNOG" id="ENOG50321WG">
    <property type="taxonomic scope" value="Bacteria"/>
</dbReference>
<dbReference type="InParanoid" id="P54573"/>
<dbReference type="OrthoDB" id="2454574at2"/>
<dbReference type="BioCyc" id="BSUB:BSU23540-MONOMER"/>
<dbReference type="Proteomes" id="UP000001570">
    <property type="component" value="Chromosome"/>
</dbReference>
<proteinExistence type="evidence at protein level"/>
<accession>P54573</accession>